<comment type="function">
    <text evidence="1">Specifically methylates the pseudouridine at position 1915 (m3Psi1915) in 23S rRNA.</text>
</comment>
<comment type="catalytic activity">
    <reaction evidence="1">
        <text>pseudouridine(1915) in 23S rRNA + S-adenosyl-L-methionine = N(3)-methylpseudouridine(1915) in 23S rRNA + S-adenosyl-L-homocysteine + H(+)</text>
        <dbReference type="Rhea" id="RHEA:42752"/>
        <dbReference type="Rhea" id="RHEA-COMP:10221"/>
        <dbReference type="Rhea" id="RHEA-COMP:10222"/>
        <dbReference type="ChEBI" id="CHEBI:15378"/>
        <dbReference type="ChEBI" id="CHEBI:57856"/>
        <dbReference type="ChEBI" id="CHEBI:59789"/>
        <dbReference type="ChEBI" id="CHEBI:65314"/>
        <dbReference type="ChEBI" id="CHEBI:74486"/>
        <dbReference type="EC" id="2.1.1.177"/>
    </reaction>
</comment>
<comment type="subunit">
    <text evidence="1">Homodimer.</text>
</comment>
<comment type="subcellular location">
    <subcellularLocation>
        <location evidence="1">Cytoplasm</location>
    </subcellularLocation>
</comment>
<comment type="similarity">
    <text evidence="1">Belongs to the RNA methyltransferase RlmH family.</text>
</comment>
<feature type="chain" id="PRO_1000061749" description="Ribosomal RNA large subunit methyltransferase H">
    <location>
        <begin position="1"/>
        <end position="155"/>
    </location>
</feature>
<feature type="binding site" evidence="1">
    <location>
        <position position="72"/>
    </location>
    <ligand>
        <name>S-adenosyl-L-methionine</name>
        <dbReference type="ChEBI" id="CHEBI:59789"/>
    </ligand>
</feature>
<feature type="binding site" evidence="1">
    <location>
        <position position="103"/>
    </location>
    <ligand>
        <name>S-adenosyl-L-methionine</name>
        <dbReference type="ChEBI" id="CHEBI:59789"/>
    </ligand>
</feature>
<feature type="binding site" evidence="1">
    <location>
        <begin position="122"/>
        <end position="127"/>
    </location>
    <ligand>
        <name>S-adenosyl-L-methionine</name>
        <dbReference type="ChEBI" id="CHEBI:59789"/>
    </ligand>
</feature>
<keyword id="KW-0963">Cytoplasm</keyword>
<keyword id="KW-0489">Methyltransferase</keyword>
<keyword id="KW-0698">rRNA processing</keyword>
<keyword id="KW-0949">S-adenosyl-L-methionine</keyword>
<keyword id="KW-0808">Transferase</keyword>
<name>RLMH_ACISJ</name>
<reference key="1">
    <citation type="submission" date="2006-12" db="EMBL/GenBank/DDBJ databases">
        <title>Complete sequence of chromosome 1 of Acidovorax sp. JS42.</title>
        <authorList>
            <person name="Copeland A."/>
            <person name="Lucas S."/>
            <person name="Lapidus A."/>
            <person name="Barry K."/>
            <person name="Detter J.C."/>
            <person name="Glavina del Rio T."/>
            <person name="Dalin E."/>
            <person name="Tice H."/>
            <person name="Pitluck S."/>
            <person name="Chertkov O."/>
            <person name="Brettin T."/>
            <person name="Bruce D."/>
            <person name="Han C."/>
            <person name="Tapia R."/>
            <person name="Gilna P."/>
            <person name="Schmutz J."/>
            <person name="Larimer F."/>
            <person name="Land M."/>
            <person name="Hauser L."/>
            <person name="Kyrpides N."/>
            <person name="Kim E."/>
            <person name="Stahl D."/>
            <person name="Richardson P."/>
        </authorList>
    </citation>
    <scope>NUCLEOTIDE SEQUENCE [LARGE SCALE GENOMIC DNA]</scope>
    <source>
        <strain>JS42</strain>
    </source>
</reference>
<proteinExistence type="inferred from homology"/>
<organism>
    <name type="scientific">Acidovorax sp. (strain JS42)</name>
    <dbReference type="NCBI Taxonomy" id="232721"/>
    <lineage>
        <taxon>Bacteria</taxon>
        <taxon>Pseudomonadati</taxon>
        <taxon>Pseudomonadota</taxon>
        <taxon>Betaproteobacteria</taxon>
        <taxon>Burkholderiales</taxon>
        <taxon>Comamonadaceae</taxon>
        <taxon>Acidovorax</taxon>
    </lineage>
</organism>
<sequence>MKLLIVAVGQRVPDWAQTAYDDYAKRFPPELKVELKAVKTEPRGSKTLETLYAAERERIEAAIPRGTRVVVLDERGTGLTTKALAQRLKDWQLGGDDVALVIGGPDGLDPAFRQAAHERIRLSDLTLPHAMVRVLLIEQLYRAWSVNAGHPYHRE</sequence>
<dbReference type="EC" id="2.1.1.177" evidence="1"/>
<dbReference type="EMBL" id="CP000539">
    <property type="protein sequence ID" value="ABM42082.1"/>
    <property type="molecule type" value="Genomic_DNA"/>
</dbReference>
<dbReference type="SMR" id="A1W757"/>
<dbReference type="STRING" id="232721.Ajs_1902"/>
<dbReference type="KEGG" id="ajs:Ajs_1902"/>
<dbReference type="eggNOG" id="COG1576">
    <property type="taxonomic scope" value="Bacteria"/>
</dbReference>
<dbReference type="HOGENOM" id="CLU_100552_1_0_4"/>
<dbReference type="Proteomes" id="UP000000645">
    <property type="component" value="Chromosome"/>
</dbReference>
<dbReference type="GO" id="GO:0005737">
    <property type="term" value="C:cytoplasm"/>
    <property type="evidence" value="ECO:0007669"/>
    <property type="project" value="UniProtKB-SubCell"/>
</dbReference>
<dbReference type="GO" id="GO:0070038">
    <property type="term" value="F:rRNA (pseudouridine-N3-)-methyltransferase activity"/>
    <property type="evidence" value="ECO:0007669"/>
    <property type="project" value="UniProtKB-UniRule"/>
</dbReference>
<dbReference type="CDD" id="cd18081">
    <property type="entry name" value="RlmH-like"/>
    <property type="match status" value="1"/>
</dbReference>
<dbReference type="Gene3D" id="3.40.1280.10">
    <property type="match status" value="1"/>
</dbReference>
<dbReference type="HAMAP" id="MF_00658">
    <property type="entry name" value="23SrRNA_methyltr_H"/>
    <property type="match status" value="1"/>
</dbReference>
<dbReference type="InterPro" id="IPR029028">
    <property type="entry name" value="Alpha/beta_knot_MTases"/>
</dbReference>
<dbReference type="InterPro" id="IPR003742">
    <property type="entry name" value="RlmH-like"/>
</dbReference>
<dbReference type="InterPro" id="IPR029026">
    <property type="entry name" value="tRNA_m1G_MTases_N"/>
</dbReference>
<dbReference type="NCBIfam" id="NF000986">
    <property type="entry name" value="PRK00103.1-4"/>
    <property type="match status" value="1"/>
</dbReference>
<dbReference type="PANTHER" id="PTHR33603">
    <property type="entry name" value="METHYLTRANSFERASE"/>
    <property type="match status" value="1"/>
</dbReference>
<dbReference type="PANTHER" id="PTHR33603:SF1">
    <property type="entry name" value="RIBOSOMAL RNA LARGE SUBUNIT METHYLTRANSFERASE H"/>
    <property type="match status" value="1"/>
</dbReference>
<dbReference type="Pfam" id="PF02590">
    <property type="entry name" value="SPOUT_MTase"/>
    <property type="match status" value="1"/>
</dbReference>
<dbReference type="PIRSF" id="PIRSF004505">
    <property type="entry name" value="MT_bac"/>
    <property type="match status" value="1"/>
</dbReference>
<dbReference type="SUPFAM" id="SSF75217">
    <property type="entry name" value="alpha/beta knot"/>
    <property type="match status" value="1"/>
</dbReference>
<gene>
    <name evidence="1" type="primary">rlmH</name>
    <name type="ordered locus">Ajs_1902</name>
</gene>
<protein>
    <recommendedName>
        <fullName evidence="1">Ribosomal RNA large subunit methyltransferase H</fullName>
        <ecNumber evidence="1">2.1.1.177</ecNumber>
    </recommendedName>
    <alternativeName>
        <fullName evidence="1">23S rRNA (pseudouridine1915-N3)-methyltransferase</fullName>
    </alternativeName>
    <alternativeName>
        <fullName evidence="1">23S rRNA m3Psi1915 methyltransferase</fullName>
    </alternativeName>
    <alternativeName>
        <fullName evidence="1">rRNA (pseudouridine-N3-)-methyltransferase RlmH</fullName>
    </alternativeName>
</protein>
<evidence type="ECO:0000255" key="1">
    <source>
        <dbReference type="HAMAP-Rule" id="MF_00658"/>
    </source>
</evidence>
<accession>A1W757</accession>